<evidence type="ECO:0000255" key="1">
    <source>
        <dbReference type="HAMAP-Rule" id="MF_01382"/>
    </source>
</evidence>
<evidence type="ECO:0000256" key="2">
    <source>
        <dbReference type="SAM" id="MobiDB-lite"/>
    </source>
</evidence>
<proteinExistence type="inferred from homology"/>
<organism>
    <name type="scientific">Streptococcus pyogenes serotype M5 (strain Manfredo)</name>
    <dbReference type="NCBI Taxonomy" id="160491"/>
    <lineage>
        <taxon>Bacteria</taxon>
        <taxon>Bacillati</taxon>
        <taxon>Bacillota</taxon>
        <taxon>Bacilli</taxon>
        <taxon>Lactobacillales</taxon>
        <taxon>Streptococcaceae</taxon>
        <taxon>Streptococcus</taxon>
    </lineage>
</organism>
<accession>A2RCT1</accession>
<name>SECA_STRPG</name>
<feature type="chain" id="PRO_0000318454" description="Protein translocase subunit SecA">
    <location>
        <begin position="1"/>
        <end position="839"/>
    </location>
</feature>
<feature type="region of interest" description="Disordered" evidence="2">
    <location>
        <begin position="780"/>
        <end position="839"/>
    </location>
</feature>
<feature type="compositionally biased region" description="Basic and acidic residues" evidence="2">
    <location>
        <begin position="780"/>
        <end position="790"/>
    </location>
</feature>
<feature type="compositionally biased region" description="Polar residues" evidence="2">
    <location>
        <begin position="791"/>
        <end position="809"/>
    </location>
</feature>
<feature type="compositionally biased region" description="Basic residues" evidence="2">
    <location>
        <begin position="827"/>
        <end position="839"/>
    </location>
</feature>
<feature type="binding site" evidence="1">
    <location>
        <position position="85"/>
    </location>
    <ligand>
        <name>ATP</name>
        <dbReference type="ChEBI" id="CHEBI:30616"/>
    </ligand>
</feature>
<feature type="binding site" evidence="1">
    <location>
        <begin position="103"/>
        <end position="107"/>
    </location>
    <ligand>
        <name>ATP</name>
        <dbReference type="ChEBI" id="CHEBI:30616"/>
    </ligand>
</feature>
<feature type="binding site" evidence="1">
    <location>
        <position position="493"/>
    </location>
    <ligand>
        <name>ATP</name>
        <dbReference type="ChEBI" id="CHEBI:30616"/>
    </ligand>
</feature>
<feature type="binding site" evidence="1">
    <location>
        <position position="821"/>
    </location>
    <ligand>
        <name>Zn(2+)</name>
        <dbReference type="ChEBI" id="CHEBI:29105"/>
    </ligand>
</feature>
<feature type="binding site" evidence="1">
    <location>
        <position position="823"/>
    </location>
    <ligand>
        <name>Zn(2+)</name>
        <dbReference type="ChEBI" id="CHEBI:29105"/>
    </ligand>
</feature>
<feature type="binding site" evidence="1">
    <location>
        <position position="832"/>
    </location>
    <ligand>
        <name>Zn(2+)</name>
        <dbReference type="ChEBI" id="CHEBI:29105"/>
    </ligand>
</feature>
<feature type="binding site" evidence="1">
    <location>
        <position position="833"/>
    </location>
    <ligand>
        <name>Zn(2+)</name>
        <dbReference type="ChEBI" id="CHEBI:29105"/>
    </ligand>
</feature>
<comment type="function">
    <text evidence="1">Part of the Sec protein translocase complex. Interacts with the SecYEG preprotein conducting channel. Has a central role in coupling the hydrolysis of ATP to the transfer of proteins into and across the cell membrane, serving as an ATP-driven molecular motor driving the stepwise translocation of polypeptide chains across the membrane.</text>
</comment>
<comment type="catalytic activity">
    <reaction evidence="1">
        <text>ATP + H2O + cellular proteinSide 1 = ADP + phosphate + cellular proteinSide 2.</text>
        <dbReference type="EC" id="7.4.2.8"/>
    </reaction>
</comment>
<comment type="cofactor">
    <cofactor evidence="1">
        <name>Zn(2+)</name>
        <dbReference type="ChEBI" id="CHEBI:29105"/>
    </cofactor>
    <text evidence="1">May bind 1 zinc ion per subunit.</text>
</comment>
<comment type="subunit">
    <text evidence="1">Monomer and homodimer. Part of the essential Sec protein translocation apparatus which comprises SecA, SecYEG and auxiliary proteins SecDF. Other proteins may also be involved.</text>
</comment>
<comment type="subcellular location">
    <subcellularLocation>
        <location evidence="1">Cell membrane</location>
        <topology evidence="1">Peripheral membrane protein</topology>
        <orientation evidence="1">Cytoplasmic side</orientation>
    </subcellularLocation>
    <subcellularLocation>
        <location evidence="1">Cytoplasm</location>
    </subcellularLocation>
    <text evidence="1">Distribution is 50-50.</text>
</comment>
<comment type="similarity">
    <text evidence="1">Belongs to the SecA family.</text>
</comment>
<sequence>MANILRKVIENDKGELRKLEKIAKKVESYADQMASLSDRDLQGKTLEFKERYQKGETLEQLLPEAFAVVREAAKRVLGLFPYRVQIMGGIVLHNGDVPEMRTGEGKTLTATMPVYLNAIAGEGVHVITVNEYLSTRDATEMGEVYSWLGLSVGINLAAKSPAEKREAYNCDITYSTNSEVGFDYLRDNMVVRQEDMVQRPLNFALVDEVDSVLIDEARTPLIVSGAVSSETNQLYIRADMFVKTLTSVDYVIDVPTKTIGLSDSGIDKAESYFNLSNLYDIENVALTHFIDNALRANYIMLLDIDYVVSEDGEILIVDQFTGRTMEGRRFSDGLHQAIEAKEGVRIQEESKTSASITYQNMFRMYKKLAGMTGTAKTEEEEFREVYNMRIIPIPTNRPIARIDHTDLLYPTLESKFRAVVEDVKTRHAKGQPILVGTVAVETSDLISRKLVEAGIPHEVLNAKNHFKEAQIIMNAGQRGAVTIATNMAGRGTDIKLGEGVRELGGLCVIGTERHESRRIDNQLRGRSGRQGDPGESQFYLSLEDDLMRRFGSDRIKAFLDRMKLDEEDTVIKSGMLGRQVESAQKRVEGNNYDTRKQVLQYDDVMREQREIIYANRRDVITANRDLGPEIKAMIKRTIDRAVDAHARSNRKDAVDAIVTFARTSLVPEESISAKELRGLKDEQIKEKLYQRALAIYDQQLSKLRDQEAIIEFQKVLILMIVDNKWTEHIDALDQLRNAVGLRGYAQNNPVVEYQAEGFKMFQDMIGAIEFDVTRTMMKAQIHEQERERASQRATTAAPQNIQSQQSANTDDLPKVERNEACPCGSGKKFKNCHGRKSFS</sequence>
<gene>
    <name evidence="1" type="primary">secA</name>
    <name type="ordered locus">SpyM50312</name>
</gene>
<dbReference type="EC" id="7.4.2.8" evidence="1"/>
<dbReference type="EMBL" id="AM295007">
    <property type="protein sequence ID" value="CAM29654.1"/>
    <property type="molecule type" value="Genomic_DNA"/>
</dbReference>
<dbReference type="RefSeq" id="WP_002983193.1">
    <property type="nucleotide sequence ID" value="NC_009332.1"/>
</dbReference>
<dbReference type="SMR" id="A2RCT1"/>
<dbReference type="KEGG" id="spf:SpyM50312"/>
<dbReference type="HOGENOM" id="CLU_005314_3_0_9"/>
<dbReference type="GO" id="GO:0031522">
    <property type="term" value="C:cell envelope Sec protein transport complex"/>
    <property type="evidence" value="ECO:0007669"/>
    <property type="project" value="TreeGrafter"/>
</dbReference>
<dbReference type="GO" id="GO:0005829">
    <property type="term" value="C:cytosol"/>
    <property type="evidence" value="ECO:0007669"/>
    <property type="project" value="TreeGrafter"/>
</dbReference>
<dbReference type="GO" id="GO:0005886">
    <property type="term" value="C:plasma membrane"/>
    <property type="evidence" value="ECO:0007669"/>
    <property type="project" value="UniProtKB-SubCell"/>
</dbReference>
<dbReference type="GO" id="GO:0005524">
    <property type="term" value="F:ATP binding"/>
    <property type="evidence" value="ECO:0007669"/>
    <property type="project" value="UniProtKB-UniRule"/>
</dbReference>
<dbReference type="GO" id="GO:0046872">
    <property type="term" value="F:metal ion binding"/>
    <property type="evidence" value="ECO:0007669"/>
    <property type="project" value="UniProtKB-KW"/>
</dbReference>
<dbReference type="GO" id="GO:0008564">
    <property type="term" value="F:protein-exporting ATPase activity"/>
    <property type="evidence" value="ECO:0007669"/>
    <property type="project" value="UniProtKB-EC"/>
</dbReference>
<dbReference type="GO" id="GO:0065002">
    <property type="term" value="P:intracellular protein transmembrane transport"/>
    <property type="evidence" value="ECO:0007669"/>
    <property type="project" value="UniProtKB-UniRule"/>
</dbReference>
<dbReference type="GO" id="GO:0017038">
    <property type="term" value="P:protein import"/>
    <property type="evidence" value="ECO:0007669"/>
    <property type="project" value="InterPro"/>
</dbReference>
<dbReference type="GO" id="GO:0006605">
    <property type="term" value="P:protein targeting"/>
    <property type="evidence" value="ECO:0007669"/>
    <property type="project" value="UniProtKB-UniRule"/>
</dbReference>
<dbReference type="GO" id="GO:0043952">
    <property type="term" value="P:protein transport by the Sec complex"/>
    <property type="evidence" value="ECO:0007669"/>
    <property type="project" value="TreeGrafter"/>
</dbReference>
<dbReference type="CDD" id="cd17928">
    <property type="entry name" value="DEXDc_SecA"/>
    <property type="match status" value="1"/>
</dbReference>
<dbReference type="CDD" id="cd18803">
    <property type="entry name" value="SF2_C_secA"/>
    <property type="match status" value="1"/>
</dbReference>
<dbReference type="FunFam" id="1.10.3060.10:FF:000002">
    <property type="entry name" value="Preprotein translocase subunit SecA"/>
    <property type="match status" value="1"/>
</dbReference>
<dbReference type="FunFam" id="3.40.50.300:FF:000429">
    <property type="entry name" value="Preprotein translocase subunit SecA"/>
    <property type="match status" value="1"/>
</dbReference>
<dbReference type="FunFam" id="3.90.1440.10:FF:000001">
    <property type="entry name" value="Preprotein translocase subunit SecA"/>
    <property type="match status" value="1"/>
</dbReference>
<dbReference type="Gene3D" id="1.10.3060.10">
    <property type="entry name" value="Helical scaffold and wing domains of SecA"/>
    <property type="match status" value="1"/>
</dbReference>
<dbReference type="Gene3D" id="3.40.50.300">
    <property type="entry name" value="P-loop containing nucleotide triphosphate hydrolases"/>
    <property type="match status" value="3"/>
</dbReference>
<dbReference type="Gene3D" id="3.90.1440.10">
    <property type="entry name" value="SecA, preprotein cross-linking domain"/>
    <property type="match status" value="1"/>
</dbReference>
<dbReference type="HAMAP" id="MF_01382">
    <property type="entry name" value="SecA"/>
    <property type="match status" value="1"/>
</dbReference>
<dbReference type="InterPro" id="IPR014001">
    <property type="entry name" value="Helicase_ATP-bd"/>
</dbReference>
<dbReference type="InterPro" id="IPR001650">
    <property type="entry name" value="Helicase_C-like"/>
</dbReference>
<dbReference type="InterPro" id="IPR027417">
    <property type="entry name" value="P-loop_NTPase"/>
</dbReference>
<dbReference type="InterPro" id="IPR004027">
    <property type="entry name" value="SEC_C_motif"/>
</dbReference>
<dbReference type="InterPro" id="IPR000185">
    <property type="entry name" value="SecA"/>
</dbReference>
<dbReference type="InterPro" id="IPR020937">
    <property type="entry name" value="SecA_CS"/>
</dbReference>
<dbReference type="InterPro" id="IPR011115">
    <property type="entry name" value="SecA_DEAD"/>
</dbReference>
<dbReference type="InterPro" id="IPR014018">
    <property type="entry name" value="SecA_motor_DEAD"/>
</dbReference>
<dbReference type="InterPro" id="IPR011130">
    <property type="entry name" value="SecA_preprotein_X-link_dom"/>
</dbReference>
<dbReference type="InterPro" id="IPR044722">
    <property type="entry name" value="SecA_SF2_C"/>
</dbReference>
<dbReference type="InterPro" id="IPR011116">
    <property type="entry name" value="SecA_Wing/Scaffold"/>
</dbReference>
<dbReference type="InterPro" id="IPR036266">
    <property type="entry name" value="SecA_Wing/Scaffold_sf"/>
</dbReference>
<dbReference type="InterPro" id="IPR036670">
    <property type="entry name" value="SecA_X-link_sf"/>
</dbReference>
<dbReference type="NCBIfam" id="NF006630">
    <property type="entry name" value="PRK09200.1"/>
    <property type="match status" value="1"/>
</dbReference>
<dbReference type="NCBIfam" id="TIGR00963">
    <property type="entry name" value="secA"/>
    <property type="match status" value="1"/>
</dbReference>
<dbReference type="PANTHER" id="PTHR30612:SF0">
    <property type="entry name" value="CHLOROPLAST PROTEIN-TRANSPORTING ATPASE"/>
    <property type="match status" value="1"/>
</dbReference>
<dbReference type="PANTHER" id="PTHR30612">
    <property type="entry name" value="SECA INNER MEMBRANE COMPONENT OF SEC PROTEIN SECRETION SYSTEM"/>
    <property type="match status" value="1"/>
</dbReference>
<dbReference type="Pfam" id="PF21090">
    <property type="entry name" value="P-loop_SecA"/>
    <property type="match status" value="2"/>
</dbReference>
<dbReference type="Pfam" id="PF02810">
    <property type="entry name" value="SEC-C"/>
    <property type="match status" value="1"/>
</dbReference>
<dbReference type="Pfam" id="PF07517">
    <property type="entry name" value="SecA_DEAD"/>
    <property type="match status" value="1"/>
</dbReference>
<dbReference type="Pfam" id="PF01043">
    <property type="entry name" value="SecA_PP_bind"/>
    <property type="match status" value="1"/>
</dbReference>
<dbReference type="Pfam" id="PF07516">
    <property type="entry name" value="SecA_SW"/>
    <property type="match status" value="1"/>
</dbReference>
<dbReference type="PRINTS" id="PR00906">
    <property type="entry name" value="SECA"/>
</dbReference>
<dbReference type="SMART" id="SM00957">
    <property type="entry name" value="SecA_DEAD"/>
    <property type="match status" value="1"/>
</dbReference>
<dbReference type="SMART" id="SM00958">
    <property type="entry name" value="SecA_PP_bind"/>
    <property type="match status" value="1"/>
</dbReference>
<dbReference type="SUPFAM" id="SSF81886">
    <property type="entry name" value="Helical scaffold and wing domains of SecA"/>
    <property type="match status" value="1"/>
</dbReference>
<dbReference type="SUPFAM" id="SSF52540">
    <property type="entry name" value="P-loop containing nucleoside triphosphate hydrolases"/>
    <property type="match status" value="2"/>
</dbReference>
<dbReference type="SUPFAM" id="SSF81767">
    <property type="entry name" value="Pre-protein crosslinking domain of SecA"/>
    <property type="match status" value="1"/>
</dbReference>
<dbReference type="PROSITE" id="PS01312">
    <property type="entry name" value="SECA"/>
    <property type="match status" value="1"/>
</dbReference>
<dbReference type="PROSITE" id="PS51196">
    <property type="entry name" value="SECA_MOTOR_DEAD"/>
    <property type="match status" value="1"/>
</dbReference>
<reference key="1">
    <citation type="journal article" date="2007" name="J. Bacteriol.">
        <title>Complete genome of acute rheumatic fever-associated serotype M5 Streptococcus pyogenes strain Manfredo.</title>
        <authorList>
            <person name="Holden M.T.G."/>
            <person name="Scott A."/>
            <person name="Cherevach I."/>
            <person name="Chillingworth T."/>
            <person name="Churcher C."/>
            <person name="Cronin A."/>
            <person name="Dowd L."/>
            <person name="Feltwell T."/>
            <person name="Hamlin N."/>
            <person name="Holroyd S."/>
            <person name="Jagels K."/>
            <person name="Moule S."/>
            <person name="Mungall K."/>
            <person name="Quail M.A."/>
            <person name="Price C."/>
            <person name="Rabbinowitsch E."/>
            <person name="Sharp S."/>
            <person name="Skelton J."/>
            <person name="Whitehead S."/>
            <person name="Barrell B.G."/>
            <person name="Kehoe M."/>
            <person name="Parkhill J."/>
        </authorList>
    </citation>
    <scope>NUCLEOTIDE SEQUENCE [LARGE SCALE GENOMIC DNA]</scope>
    <source>
        <strain>Manfredo</strain>
    </source>
</reference>
<keyword id="KW-0067">ATP-binding</keyword>
<keyword id="KW-1003">Cell membrane</keyword>
<keyword id="KW-0963">Cytoplasm</keyword>
<keyword id="KW-0472">Membrane</keyword>
<keyword id="KW-0479">Metal-binding</keyword>
<keyword id="KW-0547">Nucleotide-binding</keyword>
<keyword id="KW-0653">Protein transport</keyword>
<keyword id="KW-1278">Translocase</keyword>
<keyword id="KW-0811">Translocation</keyword>
<keyword id="KW-0813">Transport</keyword>
<keyword id="KW-0862">Zinc</keyword>
<protein>
    <recommendedName>
        <fullName evidence="1">Protein translocase subunit SecA</fullName>
        <ecNumber evidence="1">7.4.2.8</ecNumber>
    </recommendedName>
</protein>